<proteinExistence type="inferred from homology"/>
<reference key="1">
    <citation type="journal article" date="1985" name="Nucleic Acids Res.">
        <title>Nucleotide sequence of Candida pelliculosa beta-glucosidase gene.</title>
        <authorList>
            <person name="Kohchi C."/>
            <person name="Toh-e A."/>
        </authorList>
    </citation>
    <scope>NUCLEOTIDE SEQUENCE [GENOMIC DNA]</scope>
    <source>
        <strain>Acetaetherius</strain>
    </source>
</reference>
<evidence type="ECO:0000250" key="1"/>
<evidence type="ECO:0000255" key="2"/>
<evidence type="ECO:0000305" key="3"/>
<dbReference type="EC" id="3.2.1.21"/>
<dbReference type="EMBL" id="X02903">
    <property type="protein sequence ID" value="CAA26662.1"/>
    <property type="molecule type" value="Genomic_DNA"/>
</dbReference>
<dbReference type="PIR" id="B23783">
    <property type="entry name" value="GLHQ"/>
</dbReference>
<dbReference type="SMR" id="P06835"/>
<dbReference type="BindingDB" id="P06835"/>
<dbReference type="ChEMBL" id="CHEMBL4168"/>
<dbReference type="CAZy" id="GH3">
    <property type="family name" value="Glycoside Hydrolase Family 3"/>
</dbReference>
<dbReference type="UniPathway" id="UPA00696"/>
<dbReference type="GO" id="GO:0008422">
    <property type="term" value="F:beta-glucosidase activity"/>
    <property type="evidence" value="ECO:0007669"/>
    <property type="project" value="UniProtKB-EC"/>
</dbReference>
<dbReference type="GO" id="GO:0030245">
    <property type="term" value="P:cellulose catabolic process"/>
    <property type="evidence" value="ECO:0007669"/>
    <property type="project" value="UniProtKB-UniPathway"/>
</dbReference>
<dbReference type="FunFam" id="3.20.20.300:FF:000002">
    <property type="entry name" value="Probable beta-glucosidase"/>
    <property type="match status" value="1"/>
</dbReference>
<dbReference type="Gene3D" id="3.40.50.1700">
    <property type="entry name" value="Glycoside hydrolase family 3 C-terminal domain"/>
    <property type="match status" value="1"/>
</dbReference>
<dbReference type="Gene3D" id="3.20.20.300">
    <property type="entry name" value="Glycoside hydrolase, family 3, N-terminal domain"/>
    <property type="match status" value="1"/>
</dbReference>
<dbReference type="InterPro" id="IPR050288">
    <property type="entry name" value="Cellulose_deg_GH3"/>
</dbReference>
<dbReference type="InterPro" id="IPR019800">
    <property type="entry name" value="Glyco_hydro_3_AS"/>
</dbReference>
<dbReference type="InterPro" id="IPR002772">
    <property type="entry name" value="Glyco_hydro_3_C"/>
</dbReference>
<dbReference type="InterPro" id="IPR036881">
    <property type="entry name" value="Glyco_hydro_3_C_sf"/>
</dbReference>
<dbReference type="InterPro" id="IPR001764">
    <property type="entry name" value="Glyco_hydro_3_N"/>
</dbReference>
<dbReference type="InterPro" id="IPR036962">
    <property type="entry name" value="Glyco_hydro_3_N_sf"/>
</dbReference>
<dbReference type="InterPro" id="IPR017853">
    <property type="entry name" value="Glycoside_hydrolase_SF"/>
</dbReference>
<dbReference type="PANTHER" id="PTHR42715">
    <property type="entry name" value="BETA-GLUCOSIDASE"/>
    <property type="match status" value="1"/>
</dbReference>
<dbReference type="PANTHER" id="PTHR42715:SF2">
    <property type="entry name" value="BETA-GLUCOSIDASE F-RELATED"/>
    <property type="match status" value="1"/>
</dbReference>
<dbReference type="Pfam" id="PF00933">
    <property type="entry name" value="Glyco_hydro_3"/>
    <property type="match status" value="1"/>
</dbReference>
<dbReference type="Pfam" id="PF01915">
    <property type="entry name" value="Glyco_hydro_3_C"/>
    <property type="match status" value="1"/>
</dbReference>
<dbReference type="PRINTS" id="PR00133">
    <property type="entry name" value="GLHYDRLASE3"/>
</dbReference>
<dbReference type="SUPFAM" id="SSF51445">
    <property type="entry name" value="(Trans)glycosidases"/>
    <property type="match status" value="1"/>
</dbReference>
<dbReference type="SUPFAM" id="SSF52279">
    <property type="entry name" value="Beta-D-glucan exohydrolase, C-terminal domain"/>
    <property type="match status" value="1"/>
</dbReference>
<dbReference type="PROSITE" id="PS00775">
    <property type="entry name" value="GLYCOSYL_HYDROL_F3"/>
    <property type="match status" value="1"/>
</dbReference>
<accession>P06835</accession>
<protein>
    <recommendedName>
        <fullName>Beta-glucosidase</fullName>
        <ecNumber>3.2.1.21</ecNumber>
    </recommendedName>
    <alternativeName>
        <fullName>Beta-D-glucoside glucohydrolase</fullName>
    </alternativeName>
    <alternativeName>
        <fullName>Cellobiase</fullName>
    </alternativeName>
    <alternativeName>
        <fullName>Gentiobiase</fullName>
    </alternativeName>
</protein>
<feature type="signal peptide" evidence="2">
    <location>
        <begin position="1"/>
        <end position="20"/>
    </location>
</feature>
<feature type="chain" id="PRO_0000011777" description="Beta-glucosidase">
    <location>
        <begin position="21"/>
        <end position="825"/>
    </location>
</feature>
<feature type="active site" evidence="1">
    <location>
        <position position="299"/>
    </location>
</feature>
<feature type="glycosylation site" description="N-linked (GlcNAc...) asparagine" evidence="2">
    <location>
        <position position="21"/>
    </location>
</feature>
<feature type="glycosylation site" description="N-linked (GlcNAc...) asparagine" evidence="2">
    <location>
        <position position="74"/>
    </location>
</feature>
<feature type="glycosylation site" description="N-linked (GlcNAc...) asparagine" evidence="2">
    <location>
        <position position="97"/>
    </location>
</feature>
<feature type="glycosylation site" description="N-linked (GlcNAc...) asparagine" evidence="2">
    <location>
        <position position="230"/>
    </location>
</feature>
<feature type="glycosylation site" description="N-linked (GlcNAc...) asparagine" evidence="2">
    <location>
        <position position="271"/>
    </location>
</feature>
<feature type="glycosylation site" description="N-linked (GlcNAc...) asparagine" evidence="2">
    <location>
        <position position="328"/>
    </location>
</feature>
<feature type="glycosylation site" description="N-linked (GlcNAc...) asparagine" evidence="2">
    <location>
        <position position="335"/>
    </location>
</feature>
<feature type="glycosylation site" description="N-linked (GlcNAc...) asparagine" evidence="2">
    <location>
        <position position="537"/>
    </location>
</feature>
<feature type="glycosylation site" description="N-linked (GlcNAc...) asparagine" evidence="2">
    <location>
        <position position="550"/>
    </location>
</feature>
<feature type="glycosylation site" description="N-linked (GlcNAc...) asparagine" evidence="2">
    <location>
        <position position="556"/>
    </location>
</feature>
<feature type="glycosylation site" description="N-linked (GlcNAc...) asparagine" evidence="2">
    <location>
        <position position="578"/>
    </location>
</feature>
<feature type="glycosylation site" description="N-linked (GlcNAc...) asparagine" evidence="2">
    <location>
        <position position="667"/>
    </location>
</feature>
<feature type="glycosylation site" description="N-linked (GlcNAc...) asparagine" evidence="2">
    <location>
        <position position="690"/>
    </location>
</feature>
<feature type="glycosylation site" description="N-linked (GlcNAc...) asparagine" evidence="2">
    <location>
        <position position="718"/>
    </location>
</feature>
<feature type="glycosylation site" description="N-linked (GlcNAc...) asparagine" evidence="2">
    <location>
        <position position="733"/>
    </location>
</feature>
<feature type="glycosylation site" description="N-linked (GlcNAc...) asparagine" evidence="2">
    <location>
        <position position="761"/>
    </location>
</feature>
<keyword id="KW-0119">Carbohydrate metabolism</keyword>
<keyword id="KW-0136">Cellulose degradation</keyword>
<keyword id="KW-0325">Glycoprotein</keyword>
<keyword id="KW-0326">Glycosidase</keyword>
<keyword id="KW-0378">Hydrolase</keyword>
<keyword id="KW-0624">Polysaccharide degradation</keyword>
<keyword id="KW-0732">Signal</keyword>
<organism>
    <name type="scientific">Wickerhamomyces anomalus</name>
    <name type="common">Yeast</name>
    <name type="synonym">Hansenula anomala</name>
    <dbReference type="NCBI Taxonomy" id="4927"/>
    <lineage>
        <taxon>Eukaryota</taxon>
        <taxon>Fungi</taxon>
        <taxon>Dikarya</taxon>
        <taxon>Ascomycota</taxon>
        <taxon>Saccharomycotina</taxon>
        <taxon>Saccharomycetes</taxon>
        <taxon>Phaffomycetales</taxon>
        <taxon>Wickerhamomycetaceae</taxon>
        <taxon>Wickerhamomyces</taxon>
    </lineage>
</organism>
<name>BGLS_WICAO</name>
<comment type="catalytic activity">
    <reaction>
        <text>Hydrolysis of terminal, non-reducing beta-D-glucosyl residues with release of beta-D-glucose.</text>
        <dbReference type="EC" id="3.2.1.21"/>
    </reaction>
</comment>
<comment type="pathway">
    <text>Glycan metabolism; cellulose degradation.</text>
</comment>
<comment type="subunit">
    <text>Homotetramer.</text>
</comment>
<comment type="similarity">
    <text evidence="3">Belongs to the glycosyl hydrolase 3 family.</text>
</comment>
<sequence length="825" mass="89561">MLLPLYGLASFLVLSQAALVNTSAPQASNDDPFNHSPSFYPTPQGGRINDGKWQAAFYRARELVDQMSIAEKVNLTTGVGSASGPCSGNTGSVPRLNISSICVQDGPLSVRAADLTDVFPCGMAASSSFNKQLIYDRAVAIGSEFKGKGADAILGPVYGPMGVKAAGGRGWEGHGPDPYLEGVIAYLQTIGIQSQGVVSTAKHLIGNEQEHFRFAKKDKHAGKIDPGMFNTSSSLSSEIDDRAMHEIYLWPFAEAVRGGVSSIMCSYNKLNGSHACQNSYLLNYLLKEELGFQGFVMTDWGALYSGIDAANAGLDMDMPCEAQYFGGNLTTAVLNGTLPQDRLDDMATRILSALIYSGVHNPDGPNYNAQTFLTEGHEYFKQQEGDIVVLNKHVDVRSDINRAVALRSAVEGVVLLKNEHETLPLGREKVKRISILGQAAGDDSKGTSCSLRGCGSGAIGTGYGSGAGTFSYFVTPADGIGARAQQEKISYEFIGDSWNQAAAMDSALYADAAIEVANSVAGEEIGDVDGNYGDLNNLTLWHNAVPLIKNISSINNNTIVIVTSGQQIDLEPFIDNENVTAVIYSSYLGQDFGTVLAKVLFGDENPSGKLPFTIAKDVNDYIPVIEKVDVPDPVDKFTESIYVDYRYFDKYNKPVRYEFGYGLSYSNFSLSDIEIQTLQPFSENAEPAANYSETYQYKQSNMDPSEYTVPEGFKELANYTYPYIHDASSIKANSSYDYPEGYSTEQLDGPKSLAAGGLGGNHTCGMLVTLSLLKSQIKVLMLVGLHLNCMLDIQIMMNSQHLQCNYVDLKRCFWIKIILKLFLLN</sequence>